<dbReference type="EMBL" id="AP006618">
    <property type="protein sequence ID" value="BAD58691.1"/>
    <property type="molecule type" value="Genomic_DNA"/>
</dbReference>
<dbReference type="RefSeq" id="WP_011210376.1">
    <property type="nucleotide sequence ID" value="NC_006361.1"/>
</dbReference>
<dbReference type="SMR" id="Q5YT00"/>
<dbReference type="STRING" id="247156.NFA_38430"/>
<dbReference type="GeneID" id="61134529"/>
<dbReference type="KEGG" id="nfa:NFA_38430"/>
<dbReference type="eggNOG" id="COG0468">
    <property type="taxonomic scope" value="Bacteria"/>
</dbReference>
<dbReference type="HOGENOM" id="CLU_040469_3_2_11"/>
<dbReference type="OrthoDB" id="9776733at2"/>
<dbReference type="Proteomes" id="UP000006820">
    <property type="component" value="Chromosome"/>
</dbReference>
<dbReference type="GO" id="GO:0005829">
    <property type="term" value="C:cytosol"/>
    <property type="evidence" value="ECO:0007669"/>
    <property type="project" value="TreeGrafter"/>
</dbReference>
<dbReference type="GO" id="GO:0005524">
    <property type="term" value="F:ATP binding"/>
    <property type="evidence" value="ECO:0007669"/>
    <property type="project" value="UniProtKB-UniRule"/>
</dbReference>
<dbReference type="GO" id="GO:0016887">
    <property type="term" value="F:ATP hydrolysis activity"/>
    <property type="evidence" value="ECO:0007669"/>
    <property type="project" value="InterPro"/>
</dbReference>
<dbReference type="GO" id="GO:0140664">
    <property type="term" value="F:ATP-dependent DNA damage sensor activity"/>
    <property type="evidence" value="ECO:0007669"/>
    <property type="project" value="InterPro"/>
</dbReference>
<dbReference type="GO" id="GO:0003684">
    <property type="term" value="F:damaged DNA binding"/>
    <property type="evidence" value="ECO:0007669"/>
    <property type="project" value="UniProtKB-UniRule"/>
</dbReference>
<dbReference type="GO" id="GO:0003697">
    <property type="term" value="F:single-stranded DNA binding"/>
    <property type="evidence" value="ECO:0007669"/>
    <property type="project" value="UniProtKB-UniRule"/>
</dbReference>
<dbReference type="GO" id="GO:0006310">
    <property type="term" value="P:DNA recombination"/>
    <property type="evidence" value="ECO:0007669"/>
    <property type="project" value="UniProtKB-UniRule"/>
</dbReference>
<dbReference type="GO" id="GO:0006281">
    <property type="term" value="P:DNA repair"/>
    <property type="evidence" value="ECO:0007669"/>
    <property type="project" value="UniProtKB-UniRule"/>
</dbReference>
<dbReference type="GO" id="GO:0009432">
    <property type="term" value="P:SOS response"/>
    <property type="evidence" value="ECO:0007669"/>
    <property type="project" value="UniProtKB-UniRule"/>
</dbReference>
<dbReference type="CDD" id="cd00983">
    <property type="entry name" value="RecA"/>
    <property type="match status" value="1"/>
</dbReference>
<dbReference type="FunFam" id="3.40.50.300:FF:002436">
    <property type="entry name" value="Protein RecA"/>
    <property type="match status" value="1"/>
</dbReference>
<dbReference type="Gene3D" id="3.40.50.300">
    <property type="entry name" value="P-loop containing nucleotide triphosphate hydrolases"/>
    <property type="match status" value="1"/>
</dbReference>
<dbReference type="HAMAP" id="MF_00268">
    <property type="entry name" value="RecA"/>
    <property type="match status" value="1"/>
</dbReference>
<dbReference type="InterPro" id="IPR003593">
    <property type="entry name" value="AAA+_ATPase"/>
</dbReference>
<dbReference type="InterPro" id="IPR013765">
    <property type="entry name" value="DNA_recomb/repair_RecA"/>
</dbReference>
<dbReference type="InterPro" id="IPR020584">
    <property type="entry name" value="DNA_recomb/repair_RecA_CS"/>
</dbReference>
<dbReference type="InterPro" id="IPR027417">
    <property type="entry name" value="P-loop_NTPase"/>
</dbReference>
<dbReference type="InterPro" id="IPR049261">
    <property type="entry name" value="RecA-like_C"/>
</dbReference>
<dbReference type="InterPro" id="IPR049428">
    <property type="entry name" value="RecA-like_N"/>
</dbReference>
<dbReference type="InterPro" id="IPR020588">
    <property type="entry name" value="RecA_ATP-bd"/>
</dbReference>
<dbReference type="InterPro" id="IPR023400">
    <property type="entry name" value="RecA_C_sf"/>
</dbReference>
<dbReference type="InterPro" id="IPR020587">
    <property type="entry name" value="RecA_monomer-monomer_interface"/>
</dbReference>
<dbReference type="NCBIfam" id="TIGR02012">
    <property type="entry name" value="tigrfam_recA"/>
    <property type="match status" value="1"/>
</dbReference>
<dbReference type="PANTHER" id="PTHR45900:SF1">
    <property type="entry name" value="MITOCHONDRIAL DNA REPAIR PROTEIN RECA HOMOLOG-RELATED"/>
    <property type="match status" value="1"/>
</dbReference>
<dbReference type="PANTHER" id="PTHR45900">
    <property type="entry name" value="RECA"/>
    <property type="match status" value="1"/>
</dbReference>
<dbReference type="Pfam" id="PF00154">
    <property type="entry name" value="RecA"/>
    <property type="match status" value="1"/>
</dbReference>
<dbReference type="Pfam" id="PF21096">
    <property type="entry name" value="RecA_C"/>
    <property type="match status" value="1"/>
</dbReference>
<dbReference type="PRINTS" id="PR00142">
    <property type="entry name" value="RECA"/>
</dbReference>
<dbReference type="SMART" id="SM00382">
    <property type="entry name" value="AAA"/>
    <property type="match status" value="1"/>
</dbReference>
<dbReference type="SUPFAM" id="SSF52540">
    <property type="entry name" value="P-loop containing nucleoside triphosphate hydrolases"/>
    <property type="match status" value="1"/>
</dbReference>
<dbReference type="SUPFAM" id="SSF54752">
    <property type="entry name" value="RecA protein, C-terminal domain"/>
    <property type="match status" value="1"/>
</dbReference>
<dbReference type="PROSITE" id="PS00321">
    <property type="entry name" value="RECA_1"/>
    <property type="match status" value="1"/>
</dbReference>
<dbReference type="PROSITE" id="PS50162">
    <property type="entry name" value="RECA_2"/>
    <property type="match status" value="1"/>
</dbReference>
<dbReference type="PROSITE" id="PS50163">
    <property type="entry name" value="RECA_3"/>
    <property type="match status" value="1"/>
</dbReference>
<evidence type="ECO:0000255" key="1">
    <source>
        <dbReference type="HAMAP-Rule" id="MF_00268"/>
    </source>
</evidence>
<organism>
    <name type="scientific">Nocardia farcinica (strain IFM 10152)</name>
    <dbReference type="NCBI Taxonomy" id="247156"/>
    <lineage>
        <taxon>Bacteria</taxon>
        <taxon>Bacillati</taxon>
        <taxon>Actinomycetota</taxon>
        <taxon>Actinomycetes</taxon>
        <taxon>Mycobacteriales</taxon>
        <taxon>Nocardiaceae</taxon>
        <taxon>Nocardia</taxon>
    </lineage>
</organism>
<sequence>MAPQAYDRDKALELALAQVEKSFGKGAVMRLGEEARQPISVIPTGSIALDVALGIGGLPRGRIVEIYGPESSGKTTVALHAVANAQAAGGVAAFIDAEHALDPDYARKLGVDTDALLVSQPDTGEQALEIADMLVRSGAIDIIVIDSVAALVPRAEIEGEMGDSHVGLQARLMSQALRKMTSALNNSGTTAIFINQLREKIGVMFGSPETTTGGKALKFYASVRLDVRRIETLKDGSDAVGNRTRVKVVKNKVSPPFKQAEFDILYGQGISKEGSLIDMGVEQGFIRKSGSWYTYEGDQLGQGKENARKFLLENTDVRDEIEKKIKEKLGIGADLTAEDAAEVPADF</sequence>
<protein>
    <recommendedName>
        <fullName evidence="1">Protein RecA</fullName>
    </recommendedName>
    <alternativeName>
        <fullName evidence="1">Recombinase A</fullName>
    </alternativeName>
</protein>
<feature type="chain" id="PRO_0000122786" description="Protein RecA">
    <location>
        <begin position="1"/>
        <end position="347"/>
    </location>
</feature>
<feature type="binding site" evidence="1">
    <location>
        <begin position="68"/>
        <end position="75"/>
    </location>
    <ligand>
        <name>ATP</name>
        <dbReference type="ChEBI" id="CHEBI:30616"/>
    </ligand>
</feature>
<proteinExistence type="inferred from homology"/>
<keyword id="KW-0067">ATP-binding</keyword>
<keyword id="KW-0963">Cytoplasm</keyword>
<keyword id="KW-0227">DNA damage</keyword>
<keyword id="KW-0233">DNA recombination</keyword>
<keyword id="KW-0234">DNA repair</keyword>
<keyword id="KW-0238">DNA-binding</keyword>
<keyword id="KW-0547">Nucleotide-binding</keyword>
<keyword id="KW-1185">Reference proteome</keyword>
<keyword id="KW-0742">SOS response</keyword>
<name>RECA_NOCFA</name>
<reference key="1">
    <citation type="journal article" date="2004" name="Proc. Natl. Acad. Sci. U.S.A.">
        <title>The complete genomic sequence of Nocardia farcinica IFM 10152.</title>
        <authorList>
            <person name="Ishikawa J."/>
            <person name="Yamashita A."/>
            <person name="Mikami Y."/>
            <person name="Hoshino Y."/>
            <person name="Kurita H."/>
            <person name="Hotta K."/>
            <person name="Shiba T."/>
            <person name="Hattori M."/>
        </authorList>
    </citation>
    <scope>NUCLEOTIDE SEQUENCE [LARGE SCALE GENOMIC DNA]</scope>
    <source>
        <strain>IFM 10152</strain>
    </source>
</reference>
<accession>Q5YT00</accession>
<gene>
    <name evidence="1" type="primary">recA</name>
    <name type="ordered locus">NFA_38430</name>
</gene>
<comment type="function">
    <text evidence="1">Can catalyze the hydrolysis of ATP in the presence of single-stranded DNA, the ATP-dependent uptake of single-stranded DNA by duplex DNA, and the ATP-dependent hybridization of homologous single-stranded DNAs. It interacts with LexA causing its activation and leading to its autocatalytic cleavage.</text>
</comment>
<comment type="subcellular location">
    <subcellularLocation>
        <location evidence="1">Cytoplasm</location>
    </subcellularLocation>
</comment>
<comment type="similarity">
    <text evidence="1">Belongs to the RecA family.</text>
</comment>